<sequence>MSPSDLYVILQQRIFGMLIDAIKGVRPRLTDLKAEEMVEWRLKALVQMGALTQQVIDYVKKQSPAIAKAVDDVIKKDGLKVGQSFNKDLAKVLNQTPKPVSTETTQLLDSYAAQTWKSLDNNVNQSLLSTNAGKNPALRVYQDIINKSTLAVTTGLKTPQEAIFDNIDDWVKTGLPTTLIDKGGHKWSLEGYTRTVITTTTLRTYNDVRMQSLKDYSQTLAIMTSHPAARHACAPIQGKVVNTVDHGDPRFNPKYPTIYDYGYGTPAGTLGINCMHQLYPYVEGVTINRQKHYDEQEAIKNGQIQQMQRYYERQVRKWKQRKDAAERIGNTNLAAKCNSAIRGYQAKIRQLVNENDFLTRQYDRESTWVSR</sequence>
<name>VSP1_BPLLH</name>
<dbReference type="EMBL" id="EF455602">
    <property type="protein sequence ID" value="AAC00536.3"/>
    <property type="molecule type" value="Genomic_DNA"/>
</dbReference>
<dbReference type="PIR" id="A45691">
    <property type="entry name" value="A45691"/>
</dbReference>
<dbReference type="RefSeq" id="YP_001285881.1">
    <property type="nucleotide sequence ID" value="NC_009554.1"/>
</dbReference>
<dbReference type="SMR" id="Q04765"/>
<dbReference type="GeneID" id="5220383"/>
<dbReference type="KEGG" id="vg:5220383"/>
<dbReference type="OrthoDB" id="13882at10239"/>
<dbReference type="Proteomes" id="UP000001922">
    <property type="component" value="Genome"/>
</dbReference>
<dbReference type="GO" id="GO:0044423">
    <property type="term" value="C:virion component"/>
    <property type="evidence" value="ECO:0007669"/>
    <property type="project" value="UniProtKB-KW"/>
</dbReference>
<dbReference type="GO" id="GO:0005198">
    <property type="term" value="F:structural molecule activity"/>
    <property type="evidence" value="ECO:0007669"/>
    <property type="project" value="InterPro"/>
</dbReference>
<dbReference type="InterPro" id="IPR009319">
    <property type="entry name" value="Phage_A118_VSP1"/>
</dbReference>
<dbReference type="Pfam" id="PF06152">
    <property type="entry name" value="Phage_min_cap2"/>
    <property type="match status" value="1"/>
</dbReference>
<keyword id="KW-0175">Coiled coil</keyword>
<keyword id="KW-0325">Glycoprotein</keyword>
<keyword id="KW-1185">Reference proteome</keyword>
<keyword id="KW-0946">Virion</keyword>
<protein>
    <recommendedName>
        <fullName>Structural protein</fullName>
    </recommendedName>
    <alternativeName>
        <fullName>ORF1 protein</fullName>
    </alternativeName>
    <alternativeName>
        <fullName>ORF371</fullName>
    </alternativeName>
</protein>
<accession>Q04765</accession>
<accession>Q6LEG6</accession>
<proteinExistence type="inferred from homology"/>
<feature type="chain" id="PRO_0000065930" description="Structural protein">
    <location>
        <begin position="1"/>
        <end position="371"/>
    </location>
</feature>
<feature type="coiled-coil region" evidence="1">
    <location>
        <begin position="336"/>
        <end position="367"/>
    </location>
</feature>
<feature type="glycosylation site" description="N-linked (GlcNAc...) asparagine; by host" evidence="1">
    <location>
        <position position="124"/>
    </location>
</feature>
<feature type="glycosylation site" description="N-linked (GlcNAc...) asparagine; by host" evidence="1">
    <location>
        <position position="146"/>
    </location>
</feature>
<organismHost>
    <name type="scientific">Lactobacillus delbrueckii</name>
    <dbReference type="NCBI Taxonomy" id="1584"/>
</organismHost>
<comment type="subcellular location">
    <subcellularLocation>
        <location evidence="2">Virion</location>
    </subcellularLocation>
</comment>
<comment type="similarity">
    <text evidence="2">Belongs to the Lactobacillus delbrueckii bacteriophages ORF1 protein family.</text>
</comment>
<reference key="1">
    <citation type="journal article" date="1994" name="Gene">
        <title>Characterization of the genome region encoding structural proteins of Lactobacillus delbrueckii subsp. lactis bacteriophage LL-H.</title>
        <authorList>
            <person name="Mikkonen M."/>
            <person name="Alatossava T."/>
        </authorList>
    </citation>
    <scope>NUCLEOTIDE SEQUENCE [GENOMIC DNA] OF 1-249</scope>
</reference>
<reference key="2">
    <citation type="journal article" date="1993" name="J. Virol.">
        <title>Molecular comparison of the structural proteins encoding gene clusters of two related Lactobacillus delbrueckii bacteriophages.</title>
        <authorList>
            <person name="Vasala A."/>
            <person name="Dupont L."/>
            <person name="Baumann M."/>
            <person name="Ritzenthaler P."/>
            <person name="Alatossava T."/>
        </authorList>
    </citation>
    <scope>NUCLEOTIDE SEQUENCE [GENOMIC DNA] OF 248-371</scope>
</reference>
<reference key="3">
    <citation type="journal article" date="1994" name="FEMS Microbiol. Lett.">
        <title>Ribosome binding site consensus sequence of Lactobacillus delbrueckii subsp. lactis bacteriophage LL-H.</title>
        <authorList>
            <person name="Mikkonen M."/>
            <person name="Vuoristo J."/>
            <person name="Alatossava T."/>
        </authorList>
    </citation>
    <scope>NUCLEOTIDE SEQUENCE [GENOMIC DNA]</scope>
</reference>
<evidence type="ECO:0000255" key="1"/>
<evidence type="ECO:0000305" key="2"/>
<organism>
    <name type="scientific">Lactococcus phage LL-H</name>
    <name type="common">Lactococcus delbrueckii bacteriophage LL-H</name>
    <dbReference type="NCBI Taxonomy" id="12348"/>
    <lineage>
        <taxon>Viruses</taxon>
        <taxon>Duplodnaviria</taxon>
        <taxon>Heunggongvirae</taxon>
        <taxon>Uroviricota</taxon>
        <taxon>Caudoviricetes</taxon>
    </lineage>
</organism>